<proteinExistence type="inferred from homology"/>
<dbReference type="EC" id="4.2.1.49" evidence="1"/>
<dbReference type="EMBL" id="CP001111">
    <property type="protein sequence ID" value="ACF52252.1"/>
    <property type="molecule type" value="Genomic_DNA"/>
</dbReference>
<dbReference type="RefSeq" id="WP_012511524.1">
    <property type="nucleotide sequence ID" value="NC_011071.1"/>
</dbReference>
<dbReference type="SMR" id="B4SP57"/>
<dbReference type="STRING" id="391008.Smal_2552"/>
<dbReference type="KEGG" id="smt:Smal_2552"/>
<dbReference type="eggNOG" id="COG2987">
    <property type="taxonomic scope" value="Bacteria"/>
</dbReference>
<dbReference type="HOGENOM" id="CLU_018868_0_1_6"/>
<dbReference type="OrthoDB" id="9764874at2"/>
<dbReference type="UniPathway" id="UPA00379">
    <property type="reaction ID" value="UER00550"/>
</dbReference>
<dbReference type="Proteomes" id="UP000001867">
    <property type="component" value="Chromosome"/>
</dbReference>
<dbReference type="GO" id="GO:0005737">
    <property type="term" value="C:cytoplasm"/>
    <property type="evidence" value="ECO:0007669"/>
    <property type="project" value="UniProtKB-SubCell"/>
</dbReference>
<dbReference type="GO" id="GO:0016153">
    <property type="term" value="F:urocanate hydratase activity"/>
    <property type="evidence" value="ECO:0007669"/>
    <property type="project" value="UniProtKB-UniRule"/>
</dbReference>
<dbReference type="GO" id="GO:0019556">
    <property type="term" value="P:L-histidine catabolic process to glutamate and formamide"/>
    <property type="evidence" value="ECO:0007669"/>
    <property type="project" value="UniProtKB-UniPathway"/>
</dbReference>
<dbReference type="GO" id="GO:0019557">
    <property type="term" value="P:L-histidine catabolic process to glutamate and formate"/>
    <property type="evidence" value="ECO:0007669"/>
    <property type="project" value="UniProtKB-UniPathway"/>
</dbReference>
<dbReference type="FunFam" id="3.40.50.10730:FF:000001">
    <property type="entry name" value="Urocanate hydratase"/>
    <property type="match status" value="1"/>
</dbReference>
<dbReference type="Gene3D" id="3.40.50.10730">
    <property type="entry name" value="Urocanase like domains"/>
    <property type="match status" value="1"/>
</dbReference>
<dbReference type="Gene3D" id="3.40.1770.10">
    <property type="entry name" value="Urocanase superfamily"/>
    <property type="match status" value="1"/>
</dbReference>
<dbReference type="HAMAP" id="MF_00577">
    <property type="entry name" value="HutU"/>
    <property type="match status" value="1"/>
</dbReference>
<dbReference type="InterPro" id="IPR055351">
    <property type="entry name" value="Urocanase"/>
</dbReference>
<dbReference type="InterPro" id="IPR023637">
    <property type="entry name" value="Urocanase-like"/>
</dbReference>
<dbReference type="InterPro" id="IPR035401">
    <property type="entry name" value="Urocanase_C"/>
</dbReference>
<dbReference type="InterPro" id="IPR038364">
    <property type="entry name" value="Urocanase_central_sf"/>
</dbReference>
<dbReference type="InterPro" id="IPR023636">
    <property type="entry name" value="Urocanase_CS"/>
</dbReference>
<dbReference type="InterPro" id="IPR035400">
    <property type="entry name" value="Urocanase_N"/>
</dbReference>
<dbReference type="InterPro" id="IPR035085">
    <property type="entry name" value="Urocanase_Rossmann-like"/>
</dbReference>
<dbReference type="InterPro" id="IPR036190">
    <property type="entry name" value="Urocanase_sf"/>
</dbReference>
<dbReference type="NCBIfam" id="TIGR01228">
    <property type="entry name" value="hutU"/>
    <property type="match status" value="1"/>
</dbReference>
<dbReference type="NCBIfam" id="NF003820">
    <property type="entry name" value="PRK05414.1"/>
    <property type="match status" value="1"/>
</dbReference>
<dbReference type="PANTHER" id="PTHR12216">
    <property type="entry name" value="UROCANATE HYDRATASE"/>
    <property type="match status" value="1"/>
</dbReference>
<dbReference type="PANTHER" id="PTHR12216:SF4">
    <property type="entry name" value="UROCANATE HYDRATASE"/>
    <property type="match status" value="1"/>
</dbReference>
<dbReference type="Pfam" id="PF01175">
    <property type="entry name" value="Urocanase"/>
    <property type="match status" value="1"/>
</dbReference>
<dbReference type="Pfam" id="PF17392">
    <property type="entry name" value="Urocanase_C"/>
    <property type="match status" value="1"/>
</dbReference>
<dbReference type="Pfam" id="PF17391">
    <property type="entry name" value="Urocanase_N"/>
    <property type="match status" value="1"/>
</dbReference>
<dbReference type="PIRSF" id="PIRSF001423">
    <property type="entry name" value="Urocanate_hydrat"/>
    <property type="match status" value="1"/>
</dbReference>
<dbReference type="SUPFAM" id="SSF111326">
    <property type="entry name" value="Urocanase"/>
    <property type="match status" value="1"/>
</dbReference>
<dbReference type="PROSITE" id="PS01233">
    <property type="entry name" value="UROCANASE"/>
    <property type="match status" value="1"/>
</dbReference>
<feature type="chain" id="PRO_1000129579" description="Urocanate hydratase">
    <location>
        <begin position="1"/>
        <end position="555"/>
    </location>
</feature>
<feature type="active site" evidence="1">
    <location>
        <position position="409"/>
    </location>
</feature>
<feature type="binding site" evidence="1">
    <location>
        <begin position="51"/>
        <end position="52"/>
    </location>
    <ligand>
        <name>NAD(+)</name>
        <dbReference type="ChEBI" id="CHEBI:57540"/>
    </ligand>
</feature>
<feature type="binding site" evidence="1">
    <location>
        <position position="129"/>
    </location>
    <ligand>
        <name>NAD(+)</name>
        <dbReference type="ChEBI" id="CHEBI:57540"/>
    </ligand>
</feature>
<feature type="binding site" evidence="1">
    <location>
        <begin position="175"/>
        <end position="177"/>
    </location>
    <ligand>
        <name>NAD(+)</name>
        <dbReference type="ChEBI" id="CHEBI:57540"/>
    </ligand>
</feature>
<feature type="binding site" evidence="1">
    <location>
        <position position="195"/>
    </location>
    <ligand>
        <name>NAD(+)</name>
        <dbReference type="ChEBI" id="CHEBI:57540"/>
    </ligand>
</feature>
<feature type="binding site" evidence="1">
    <location>
        <begin position="262"/>
        <end position="266"/>
    </location>
    <ligand>
        <name>NAD(+)</name>
        <dbReference type="ChEBI" id="CHEBI:57540"/>
    </ligand>
</feature>
<feature type="binding site" evidence="1">
    <location>
        <begin position="272"/>
        <end position="273"/>
    </location>
    <ligand>
        <name>NAD(+)</name>
        <dbReference type="ChEBI" id="CHEBI:57540"/>
    </ligand>
</feature>
<feature type="binding site" evidence="1">
    <location>
        <position position="321"/>
    </location>
    <ligand>
        <name>NAD(+)</name>
        <dbReference type="ChEBI" id="CHEBI:57540"/>
    </ligand>
</feature>
<feature type="binding site" evidence="1">
    <location>
        <position position="491"/>
    </location>
    <ligand>
        <name>NAD(+)</name>
        <dbReference type="ChEBI" id="CHEBI:57540"/>
    </ligand>
</feature>
<reference key="1">
    <citation type="submission" date="2008-06" db="EMBL/GenBank/DDBJ databases">
        <title>Complete sequence of Stenotrophomonas maltophilia R551-3.</title>
        <authorList>
            <consortium name="US DOE Joint Genome Institute"/>
            <person name="Lucas S."/>
            <person name="Copeland A."/>
            <person name="Lapidus A."/>
            <person name="Glavina del Rio T."/>
            <person name="Dalin E."/>
            <person name="Tice H."/>
            <person name="Pitluck S."/>
            <person name="Chain P."/>
            <person name="Malfatti S."/>
            <person name="Shin M."/>
            <person name="Vergez L."/>
            <person name="Lang D."/>
            <person name="Schmutz J."/>
            <person name="Larimer F."/>
            <person name="Land M."/>
            <person name="Hauser L."/>
            <person name="Kyrpides N."/>
            <person name="Mikhailova N."/>
            <person name="Taghavi S."/>
            <person name="Monchy S."/>
            <person name="Newman L."/>
            <person name="Vangronsveld J."/>
            <person name="van der Lelie D."/>
            <person name="Richardson P."/>
        </authorList>
    </citation>
    <scope>NUCLEOTIDE SEQUENCE [LARGE SCALE GENOMIC DNA]</scope>
    <source>
        <strain>R551-3</strain>
    </source>
</reference>
<protein>
    <recommendedName>
        <fullName evidence="1">Urocanate hydratase</fullName>
        <shortName evidence="1">Urocanase</shortName>
        <ecNumber evidence="1">4.2.1.49</ecNumber>
    </recommendedName>
    <alternativeName>
        <fullName evidence="1">Imidazolonepropionate hydrolase</fullName>
    </alternativeName>
</protein>
<accession>B4SP57</accession>
<gene>
    <name evidence="1" type="primary">hutU</name>
    <name type="ordered locus">Smal_2552</name>
</gene>
<evidence type="ECO:0000255" key="1">
    <source>
        <dbReference type="HAMAP-Rule" id="MF_00577"/>
    </source>
</evidence>
<comment type="function">
    <text evidence="1">Catalyzes the conversion of urocanate to 4-imidazolone-5-propionate.</text>
</comment>
<comment type="catalytic activity">
    <reaction evidence="1">
        <text>4-imidazolone-5-propanoate = trans-urocanate + H2O</text>
        <dbReference type="Rhea" id="RHEA:13101"/>
        <dbReference type="ChEBI" id="CHEBI:15377"/>
        <dbReference type="ChEBI" id="CHEBI:17771"/>
        <dbReference type="ChEBI" id="CHEBI:77893"/>
        <dbReference type="EC" id="4.2.1.49"/>
    </reaction>
</comment>
<comment type="cofactor">
    <cofactor evidence="1">
        <name>NAD(+)</name>
        <dbReference type="ChEBI" id="CHEBI:57540"/>
    </cofactor>
    <text evidence="1">Binds 1 NAD(+) per subunit.</text>
</comment>
<comment type="pathway">
    <text evidence="1">Amino-acid degradation; L-histidine degradation into L-glutamate; N-formimidoyl-L-glutamate from L-histidine: step 2/3.</text>
</comment>
<comment type="subcellular location">
    <subcellularLocation>
        <location evidence="1">Cytoplasm</location>
    </subcellularLocation>
</comment>
<comment type="similarity">
    <text evidence="1">Belongs to the urocanase family.</text>
</comment>
<organism>
    <name type="scientific">Stenotrophomonas maltophilia (strain R551-3)</name>
    <dbReference type="NCBI Taxonomy" id="391008"/>
    <lineage>
        <taxon>Bacteria</taxon>
        <taxon>Pseudomonadati</taxon>
        <taxon>Pseudomonadota</taxon>
        <taxon>Gammaproteobacteria</taxon>
        <taxon>Lysobacterales</taxon>
        <taxon>Lysobacteraceae</taxon>
        <taxon>Stenotrophomonas</taxon>
        <taxon>Stenotrophomonas maltophilia group</taxon>
    </lineage>
</organism>
<keyword id="KW-0963">Cytoplasm</keyword>
<keyword id="KW-0369">Histidine metabolism</keyword>
<keyword id="KW-0456">Lyase</keyword>
<keyword id="KW-0520">NAD</keyword>
<sequence>MTRNDPSRTIAAPTGTTLNAKSWQTEAPLRMLMNNLHPDVAERPQELVVYGGIGRAARDWESFDAIVETLKRLDDDQTLLVQSGKPVGVFRTHADAPRVLIANSNLVPRWANWDHFNELDKKGLAMYGQMTAGSWIYIGAQGIVQGTYETFVEMGRQHFGGDLTGKWLFTGGLGGMGGAQPLAAVMAGASCLAVECRKSSIDMRLRTGYLDTWTDNLDEALRLIDESCKAGTPKSVGLLGNVADVLAELLKRGVKPDLLTDQTSAHDPVNGYLPQGWTVEQWDDKRVSAPKEVEKAARASMANHIRAMLGFHALGVPTVDYGNNLRQMALEEGVENAFDFPGFVPAYIRPLFCRGIGPFRWAALSGDPEDIAKTDAKVKELIPDNPHLHRWLDMAAEKIKFQGLPARICWVGLGDRDRLGQAFNEMVANGELKAPVVIGRDHLDSGSVASPNRETEAMADGSDAVSDWPLLNALLNTASGATWVSLHHGGGVGMGFSQHAGMVIVCDGTEAAAKRIGRVLWNDPATGVMRHADAGYEIAIDCAKEKGLDLPGILG</sequence>
<name>HUTU_STRM5</name>